<reference key="1">
    <citation type="journal article" date="1997" name="Curr. Microbiol.">
        <title>The (F1F0) ATP synthase of Buchnera aphidicola (endosymbiont of aphids): genetic analysis of the putative ATP operon.</title>
        <authorList>
            <person name="Clark M.A."/>
            <person name="Baumann P."/>
        </authorList>
    </citation>
    <scope>NUCLEOTIDE SEQUENCE [GENOMIC DNA]</scope>
</reference>
<reference key="2">
    <citation type="journal article" date="1998" name="Curr. Microbiol.">
        <title>Sequence analysis of a 34.7-kb DNA segment from the genome of Buchnera aphidicola (endosymbiont of aphids) containing groEL, dnaA, the atp operon, gidA, and rho.</title>
        <authorList>
            <person name="Clark M.A."/>
            <person name="Baumann L."/>
            <person name="Baumann P."/>
        </authorList>
    </citation>
    <scope>NUCLEOTIDE SEQUENCE [GENOMIC DNA]</scope>
</reference>
<reference key="3">
    <citation type="journal article" date="2002" name="Science">
        <title>50 million years of genomic stasis in endosymbiotic bacteria.</title>
        <authorList>
            <person name="Tamas I."/>
            <person name="Klasson L."/>
            <person name="Canbaeck B."/>
            <person name="Naeslund A.K."/>
            <person name="Eriksson A.-S."/>
            <person name="Wernegreen J.J."/>
            <person name="Sandstroem J.P."/>
            <person name="Moran N.A."/>
            <person name="Andersson S.G.E."/>
        </authorList>
    </citation>
    <scope>NUCLEOTIDE SEQUENCE [LARGE SCALE GENOMIC DNA]</scope>
    <source>
        <strain>Sg</strain>
    </source>
</reference>
<name>ATP6_BUCAP</name>
<comment type="function">
    <text evidence="1">Key component of the proton channel; it plays a direct role in the translocation of protons across the membrane.</text>
</comment>
<comment type="subunit">
    <text evidence="1">F-type ATPases have 2 components, CF(1) - the catalytic core - and CF(0) - the membrane proton channel. CF(1) has five subunits: alpha(3), beta(3), gamma(1), delta(1), epsilon(1). CF(0) has three main subunits: a(1), b(2) and c(9-12). The alpha and beta chains form an alternating ring which encloses part of the gamma chain. CF(1) is attached to CF(0) by a central stalk formed by the gamma and epsilon chains, while a peripheral stalk is formed by the delta and b chains.</text>
</comment>
<comment type="subcellular location">
    <subcellularLocation>
        <location evidence="1">Cell membrane</location>
        <topology evidence="1">Multi-pass membrane protein</topology>
    </subcellularLocation>
</comment>
<comment type="similarity">
    <text evidence="1">Belongs to the ATPase A chain family.</text>
</comment>
<accession>O51878</accession>
<gene>
    <name evidence="1" type="primary">atpB</name>
    <name type="ordered locus">BUsg_002</name>
</gene>
<dbReference type="EMBL" id="AF008210">
    <property type="protein sequence ID" value="AAC38116.1"/>
    <property type="molecule type" value="Genomic_DNA"/>
</dbReference>
<dbReference type="EMBL" id="AE013218">
    <property type="protein sequence ID" value="AAM67574.1"/>
    <property type="molecule type" value="Genomic_DNA"/>
</dbReference>
<dbReference type="RefSeq" id="WP_011053540.1">
    <property type="nucleotide sequence ID" value="NC_004061.1"/>
</dbReference>
<dbReference type="SMR" id="O51878"/>
<dbReference type="STRING" id="198804.BUsg_002"/>
<dbReference type="GeneID" id="93003464"/>
<dbReference type="KEGG" id="bas:BUsg_002"/>
<dbReference type="eggNOG" id="COG0356">
    <property type="taxonomic scope" value="Bacteria"/>
</dbReference>
<dbReference type="HOGENOM" id="CLU_041018_1_0_6"/>
<dbReference type="Proteomes" id="UP000000416">
    <property type="component" value="Chromosome"/>
</dbReference>
<dbReference type="GO" id="GO:0005886">
    <property type="term" value="C:plasma membrane"/>
    <property type="evidence" value="ECO:0007669"/>
    <property type="project" value="UniProtKB-SubCell"/>
</dbReference>
<dbReference type="GO" id="GO:0045259">
    <property type="term" value="C:proton-transporting ATP synthase complex"/>
    <property type="evidence" value="ECO:0007669"/>
    <property type="project" value="UniProtKB-KW"/>
</dbReference>
<dbReference type="GO" id="GO:0046933">
    <property type="term" value="F:proton-transporting ATP synthase activity, rotational mechanism"/>
    <property type="evidence" value="ECO:0007669"/>
    <property type="project" value="UniProtKB-UniRule"/>
</dbReference>
<dbReference type="GO" id="GO:0042777">
    <property type="term" value="P:proton motive force-driven plasma membrane ATP synthesis"/>
    <property type="evidence" value="ECO:0007669"/>
    <property type="project" value="TreeGrafter"/>
</dbReference>
<dbReference type="CDD" id="cd00310">
    <property type="entry name" value="ATP-synt_Fo_a_6"/>
    <property type="match status" value="1"/>
</dbReference>
<dbReference type="FunFam" id="1.20.120.220:FF:000002">
    <property type="entry name" value="ATP synthase subunit a"/>
    <property type="match status" value="1"/>
</dbReference>
<dbReference type="Gene3D" id="1.20.120.220">
    <property type="entry name" value="ATP synthase, F0 complex, subunit A"/>
    <property type="match status" value="1"/>
</dbReference>
<dbReference type="HAMAP" id="MF_01393">
    <property type="entry name" value="ATP_synth_a_bact"/>
    <property type="match status" value="1"/>
</dbReference>
<dbReference type="InterPro" id="IPR045082">
    <property type="entry name" value="ATP_syn_F0_a_bact/chloroplast"/>
</dbReference>
<dbReference type="InterPro" id="IPR000568">
    <property type="entry name" value="ATP_synth_F0_asu"/>
</dbReference>
<dbReference type="InterPro" id="IPR023011">
    <property type="entry name" value="ATP_synth_F0_asu_AS"/>
</dbReference>
<dbReference type="InterPro" id="IPR035908">
    <property type="entry name" value="F0_ATP_A_sf"/>
</dbReference>
<dbReference type="NCBIfam" id="TIGR01131">
    <property type="entry name" value="ATP_synt_6_or_A"/>
    <property type="match status" value="1"/>
</dbReference>
<dbReference type="NCBIfam" id="NF004477">
    <property type="entry name" value="PRK05815.1-1"/>
    <property type="match status" value="1"/>
</dbReference>
<dbReference type="PANTHER" id="PTHR42823">
    <property type="entry name" value="ATP SYNTHASE SUBUNIT A, CHLOROPLASTIC"/>
    <property type="match status" value="1"/>
</dbReference>
<dbReference type="PANTHER" id="PTHR42823:SF3">
    <property type="entry name" value="ATP SYNTHASE SUBUNIT A, CHLOROPLASTIC"/>
    <property type="match status" value="1"/>
</dbReference>
<dbReference type="Pfam" id="PF00119">
    <property type="entry name" value="ATP-synt_A"/>
    <property type="match status" value="1"/>
</dbReference>
<dbReference type="PRINTS" id="PR00123">
    <property type="entry name" value="ATPASEA"/>
</dbReference>
<dbReference type="SUPFAM" id="SSF81336">
    <property type="entry name" value="F1F0 ATP synthase subunit A"/>
    <property type="match status" value="1"/>
</dbReference>
<dbReference type="PROSITE" id="PS00449">
    <property type="entry name" value="ATPASE_A"/>
    <property type="match status" value="1"/>
</dbReference>
<keyword id="KW-0066">ATP synthesis</keyword>
<keyword id="KW-1003">Cell membrane</keyword>
<keyword id="KW-0138">CF(0)</keyword>
<keyword id="KW-0375">Hydrogen ion transport</keyword>
<keyword id="KW-0406">Ion transport</keyword>
<keyword id="KW-0472">Membrane</keyword>
<keyword id="KW-0812">Transmembrane</keyword>
<keyword id="KW-1133">Transmembrane helix</keyword>
<keyword id="KW-0813">Transport</keyword>
<feature type="chain" id="PRO_0000082050" description="ATP synthase subunit a">
    <location>
        <begin position="1"/>
        <end position="272"/>
    </location>
</feature>
<feature type="transmembrane region" description="Helical" evidence="1">
    <location>
        <begin position="41"/>
        <end position="61"/>
    </location>
</feature>
<feature type="transmembrane region" description="Helical" evidence="1">
    <location>
        <begin position="110"/>
        <end position="130"/>
    </location>
</feature>
<feature type="transmembrane region" description="Helical" evidence="1">
    <location>
        <begin position="143"/>
        <end position="165"/>
    </location>
</feature>
<feature type="transmembrane region" description="Helical" evidence="1">
    <location>
        <begin position="188"/>
        <end position="208"/>
    </location>
</feature>
<feature type="transmembrane region" description="Helical" evidence="1">
    <location>
        <begin position="222"/>
        <end position="242"/>
    </location>
</feature>
<feature type="transmembrane region" description="Helical" evidence="1">
    <location>
        <begin position="243"/>
        <end position="263"/>
    </location>
</feature>
<protein>
    <recommendedName>
        <fullName evidence="1">ATP synthase subunit a</fullName>
    </recommendedName>
    <alternativeName>
        <fullName evidence="1">ATP synthase F0 sector subunit a</fullName>
    </alternativeName>
    <alternativeName>
        <fullName evidence="1">F-ATPase subunit 6</fullName>
    </alternativeName>
</protein>
<organism>
    <name type="scientific">Buchnera aphidicola subsp. Schizaphis graminum (strain Sg)</name>
    <dbReference type="NCBI Taxonomy" id="198804"/>
    <lineage>
        <taxon>Bacteria</taxon>
        <taxon>Pseudomonadati</taxon>
        <taxon>Pseudomonadota</taxon>
        <taxon>Gammaproteobacteria</taxon>
        <taxon>Enterobacterales</taxon>
        <taxon>Erwiniaceae</taxon>
        <taxon>Buchnera</taxon>
    </lineage>
</organism>
<proteinExistence type="inferred from homology"/>
<evidence type="ECO:0000255" key="1">
    <source>
        <dbReference type="HAMAP-Rule" id="MF_01393"/>
    </source>
</evidence>
<sequence>MSLEKISNPQKYISHHLNHLQIDLCNFKFVEPGKIVSHFWVLNIDSIIFSLVLGCFFLSIFYTVAKKITTGVPNGLQASIELIFDFIRSNVKSMYQGKNPLIAPLSLTVFVWVFLMNLMDLIPIDFFPFISERFFHFPAMRIVPSADINITLSMSLGVFILILFYSVKMKGLIGFCKELTLQPFNHPVFFIFNFLLELVSLLSKPISLGLRLFGNMYSGEMIFILIAGLLPWWSQFFLNVPWAIFHILIISLQAFIFMVLTIVYLSMASQSH</sequence>